<name>PUR9_STACT</name>
<proteinExistence type="inferred from homology"/>
<reference key="1">
    <citation type="journal article" date="2009" name="Appl. Environ. Microbiol.">
        <title>Genome analysis of the meat starter culture bacterium Staphylococcus carnosus TM300.</title>
        <authorList>
            <person name="Rosenstein R."/>
            <person name="Nerz C."/>
            <person name="Biswas L."/>
            <person name="Resch A."/>
            <person name="Raddatz G."/>
            <person name="Schuster S.C."/>
            <person name="Goetz F."/>
        </authorList>
    </citation>
    <scope>NUCLEOTIDE SEQUENCE [LARGE SCALE GENOMIC DNA]</scope>
    <source>
        <strain>TM300</strain>
    </source>
</reference>
<sequence length="492" mass="54037">MKKVILSVSDKSGIVDFAKSLVGLDYELYSTGGTKRALDEAGVPVKSVSDLTQFDEIMDGRVKTLHPAVHGGILADRDKPEHLQQLKDKGIDLIDIVVVNLYPFKETVANPDVTEMDAIENIDIGGPTMLRAAAKNFKHVTTIVDPSDYDEVIEHIKNDSLDETFRKSLMIKVFEHTNDYDNAIVNFFKENKEPLRYGENPQQDAYFVRTSDAPNTIAGAKQLHGKQLSFNNIKDADATLALAKKFEEPAAVAVKHMNPCGVGVGSSIEEAFQNAYDADSQSIFGGIVAVNRPVTKELAEKLHSIFLEVVIAPSFTEEALEVLTKKKNIRLLEVEMTVDHDEKEYVSVSGGYLVQDKDTKTISRDDMKVVTKAEPTEEQWKAMELGWKVVPSVKSNAIILSNDHQTVGIGAGQMNRVGSAEIAIERAIEINDNVALVSDGFFPMDDTVELAAKAGIKAIIQPGGSIKDQDSIDMADKHGIAMVMTGVRHFKH</sequence>
<comment type="catalytic activity">
    <reaction evidence="1">
        <text>(6R)-10-formyltetrahydrofolate + 5-amino-1-(5-phospho-beta-D-ribosyl)imidazole-4-carboxamide = 5-formamido-1-(5-phospho-D-ribosyl)imidazole-4-carboxamide + (6S)-5,6,7,8-tetrahydrofolate</text>
        <dbReference type="Rhea" id="RHEA:22192"/>
        <dbReference type="ChEBI" id="CHEBI:57453"/>
        <dbReference type="ChEBI" id="CHEBI:58467"/>
        <dbReference type="ChEBI" id="CHEBI:58475"/>
        <dbReference type="ChEBI" id="CHEBI:195366"/>
        <dbReference type="EC" id="2.1.2.3"/>
    </reaction>
</comment>
<comment type="catalytic activity">
    <reaction evidence="1">
        <text>IMP + H2O = 5-formamido-1-(5-phospho-D-ribosyl)imidazole-4-carboxamide</text>
        <dbReference type="Rhea" id="RHEA:18445"/>
        <dbReference type="ChEBI" id="CHEBI:15377"/>
        <dbReference type="ChEBI" id="CHEBI:58053"/>
        <dbReference type="ChEBI" id="CHEBI:58467"/>
        <dbReference type="EC" id="3.5.4.10"/>
    </reaction>
</comment>
<comment type="pathway">
    <text evidence="1">Purine metabolism; IMP biosynthesis via de novo pathway; 5-formamido-1-(5-phospho-D-ribosyl)imidazole-4-carboxamide from 5-amino-1-(5-phospho-D-ribosyl)imidazole-4-carboxamide (10-formyl THF route): step 1/1.</text>
</comment>
<comment type="pathway">
    <text evidence="1">Purine metabolism; IMP biosynthesis via de novo pathway; IMP from 5-formamido-1-(5-phospho-D-ribosyl)imidazole-4-carboxamide: step 1/1.</text>
</comment>
<comment type="domain">
    <text evidence="1">The IMP cyclohydrolase activity resides in the N-terminal region.</text>
</comment>
<comment type="similarity">
    <text evidence="1">Belongs to the PurH family.</text>
</comment>
<accession>B9DQ42</accession>
<feature type="chain" id="PRO_1000122971" description="Bifunctional purine biosynthesis protein PurH">
    <location>
        <begin position="1"/>
        <end position="492"/>
    </location>
</feature>
<feature type="domain" description="MGS-like" evidence="2">
    <location>
        <begin position="1"/>
        <end position="144"/>
    </location>
</feature>
<protein>
    <recommendedName>
        <fullName evidence="1">Bifunctional purine biosynthesis protein PurH</fullName>
    </recommendedName>
    <domain>
        <recommendedName>
            <fullName evidence="1">Phosphoribosylaminoimidazolecarboxamide formyltransferase</fullName>
            <ecNumber evidence="1">2.1.2.3</ecNumber>
        </recommendedName>
        <alternativeName>
            <fullName evidence="1">AICAR transformylase</fullName>
        </alternativeName>
    </domain>
    <domain>
        <recommendedName>
            <fullName evidence="1">IMP cyclohydrolase</fullName>
            <ecNumber evidence="1">3.5.4.10</ecNumber>
        </recommendedName>
        <alternativeName>
            <fullName evidence="1">ATIC</fullName>
        </alternativeName>
        <alternativeName>
            <fullName evidence="1">IMP synthase</fullName>
        </alternativeName>
        <alternativeName>
            <fullName evidence="1">Inosinicase</fullName>
        </alternativeName>
    </domain>
</protein>
<evidence type="ECO:0000255" key="1">
    <source>
        <dbReference type="HAMAP-Rule" id="MF_00139"/>
    </source>
</evidence>
<evidence type="ECO:0000255" key="2">
    <source>
        <dbReference type="PROSITE-ProRule" id="PRU01202"/>
    </source>
</evidence>
<keyword id="KW-0378">Hydrolase</keyword>
<keyword id="KW-0511">Multifunctional enzyme</keyword>
<keyword id="KW-0658">Purine biosynthesis</keyword>
<keyword id="KW-1185">Reference proteome</keyword>
<keyword id="KW-0808">Transferase</keyword>
<organism>
    <name type="scientific">Staphylococcus carnosus (strain TM300)</name>
    <dbReference type="NCBI Taxonomy" id="396513"/>
    <lineage>
        <taxon>Bacteria</taxon>
        <taxon>Bacillati</taxon>
        <taxon>Bacillota</taxon>
        <taxon>Bacilli</taxon>
        <taxon>Bacillales</taxon>
        <taxon>Staphylococcaceae</taxon>
        <taxon>Staphylococcus</taxon>
    </lineage>
</organism>
<gene>
    <name evidence="1" type="primary">purH</name>
    <name type="ordered locus">Sca_0695</name>
</gene>
<dbReference type="EC" id="2.1.2.3" evidence="1"/>
<dbReference type="EC" id="3.5.4.10" evidence="1"/>
<dbReference type="EMBL" id="AM295250">
    <property type="protein sequence ID" value="CAL27606.1"/>
    <property type="molecule type" value="Genomic_DNA"/>
</dbReference>
<dbReference type="RefSeq" id="WP_015899949.1">
    <property type="nucleotide sequence ID" value="NC_012121.1"/>
</dbReference>
<dbReference type="SMR" id="B9DQ42"/>
<dbReference type="GeneID" id="93795633"/>
<dbReference type="KEGG" id="sca:SCA_0695"/>
<dbReference type="eggNOG" id="COG0138">
    <property type="taxonomic scope" value="Bacteria"/>
</dbReference>
<dbReference type="HOGENOM" id="CLU_016316_5_2_9"/>
<dbReference type="OrthoDB" id="9802065at2"/>
<dbReference type="BioCyc" id="SCAR396513:SCA_RS03530-MONOMER"/>
<dbReference type="UniPathway" id="UPA00074">
    <property type="reaction ID" value="UER00133"/>
</dbReference>
<dbReference type="UniPathway" id="UPA00074">
    <property type="reaction ID" value="UER00135"/>
</dbReference>
<dbReference type="Proteomes" id="UP000000444">
    <property type="component" value="Chromosome"/>
</dbReference>
<dbReference type="GO" id="GO:0005829">
    <property type="term" value="C:cytosol"/>
    <property type="evidence" value="ECO:0007669"/>
    <property type="project" value="TreeGrafter"/>
</dbReference>
<dbReference type="GO" id="GO:0003937">
    <property type="term" value="F:IMP cyclohydrolase activity"/>
    <property type="evidence" value="ECO:0007669"/>
    <property type="project" value="UniProtKB-UniRule"/>
</dbReference>
<dbReference type="GO" id="GO:0004643">
    <property type="term" value="F:phosphoribosylaminoimidazolecarboxamide formyltransferase activity"/>
    <property type="evidence" value="ECO:0007669"/>
    <property type="project" value="UniProtKB-UniRule"/>
</dbReference>
<dbReference type="GO" id="GO:0006189">
    <property type="term" value="P:'de novo' IMP biosynthetic process"/>
    <property type="evidence" value="ECO:0007669"/>
    <property type="project" value="UniProtKB-UniRule"/>
</dbReference>
<dbReference type="CDD" id="cd01421">
    <property type="entry name" value="IMPCH"/>
    <property type="match status" value="1"/>
</dbReference>
<dbReference type="FunFam" id="3.40.140.20:FF:000001">
    <property type="entry name" value="Bifunctional purine biosynthesis protein PurH"/>
    <property type="match status" value="1"/>
</dbReference>
<dbReference type="FunFam" id="3.40.140.20:FF:000002">
    <property type="entry name" value="Bifunctional purine biosynthesis protein PurH"/>
    <property type="match status" value="1"/>
</dbReference>
<dbReference type="FunFam" id="3.40.50.1380:FF:000001">
    <property type="entry name" value="Bifunctional purine biosynthesis protein PurH"/>
    <property type="match status" value="1"/>
</dbReference>
<dbReference type="Gene3D" id="3.40.140.20">
    <property type="match status" value="2"/>
</dbReference>
<dbReference type="Gene3D" id="3.40.50.1380">
    <property type="entry name" value="Methylglyoxal synthase-like domain"/>
    <property type="match status" value="1"/>
</dbReference>
<dbReference type="HAMAP" id="MF_00139">
    <property type="entry name" value="PurH"/>
    <property type="match status" value="1"/>
</dbReference>
<dbReference type="InterPro" id="IPR024051">
    <property type="entry name" value="AICAR_Tfase_dup_dom_sf"/>
</dbReference>
<dbReference type="InterPro" id="IPR016193">
    <property type="entry name" value="Cytidine_deaminase-like"/>
</dbReference>
<dbReference type="InterPro" id="IPR011607">
    <property type="entry name" value="MGS-like_dom"/>
</dbReference>
<dbReference type="InterPro" id="IPR036914">
    <property type="entry name" value="MGS-like_dom_sf"/>
</dbReference>
<dbReference type="InterPro" id="IPR002695">
    <property type="entry name" value="PurH-like"/>
</dbReference>
<dbReference type="NCBIfam" id="NF002049">
    <property type="entry name" value="PRK00881.1"/>
    <property type="match status" value="1"/>
</dbReference>
<dbReference type="NCBIfam" id="TIGR00355">
    <property type="entry name" value="purH"/>
    <property type="match status" value="1"/>
</dbReference>
<dbReference type="PANTHER" id="PTHR11692:SF0">
    <property type="entry name" value="BIFUNCTIONAL PURINE BIOSYNTHESIS PROTEIN ATIC"/>
    <property type="match status" value="1"/>
</dbReference>
<dbReference type="PANTHER" id="PTHR11692">
    <property type="entry name" value="BIFUNCTIONAL PURINE BIOSYNTHESIS PROTEIN PURH"/>
    <property type="match status" value="1"/>
</dbReference>
<dbReference type="Pfam" id="PF01808">
    <property type="entry name" value="AICARFT_IMPCHas"/>
    <property type="match status" value="1"/>
</dbReference>
<dbReference type="Pfam" id="PF02142">
    <property type="entry name" value="MGS"/>
    <property type="match status" value="1"/>
</dbReference>
<dbReference type="PIRSF" id="PIRSF000414">
    <property type="entry name" value="AICARFT_IMPCHas"/>
    <property type="match status" value="1"/>
</dbReference>
<dbReference type="SMART" id="SM00798">
    <property type="entry name" value="AICARFT_IMPCHas"/>
    <property type="match status" value="1"/>
</dbReference>
<dbReference type="SMART" id="SM00851">
    <property type="entry name" value="MGS"/>
    <property type="match status" value="1"/>
</dbReference>
<dbReference type="SUPFAM" id="SSF53927">
    <property type="entry name" value="Cytidine deaminase-like"/>
    <property type="match status" value="1"/>
</dbReference>
<dbReference type="SUPFAM" id="SSF52335">
    <property type="entry name" value="Methylglyoxal synthase-like"/>
    <property type="match status" value="1"/>
</dbReference>
<dbReference type="PROSITE" id="PS51855">
    <property type="entry name" value="MGS"/>
    <property type="match status" value="1"/>
</dbReference>